<proteinExistence type="evidence at transcript level"/>
<keyword id="KW-0217">Developmental protein</keyword>
<keyword id="KW-0238">DNA-binding</keyword>
<keyword id="KW-0539">Nucleus</keyword>
<keyword id="KW-1185">Reference proteome</keyword>
<keyword id="KW-0804">Transcription</keyword>
<keyword id="KW-0805">Transcription regulation</keyword>
<organism>
    <name type="scientific">Xenopus laevis</name>
    <name type="common">African clawed frog</name>
    <dbReference type="NCBI Taxonomy" id="8355"/>
    <lineage>
        <taxon>Eukaryota</taxon>
        <taxon>Metazoa</taxon>
        <taxon>Chordata</taxon>
        <taxon>Craniata</taxon>
        <taxon>Vertebrata</taxon>
        <taxon>Euteleostomi</taxon>
        <taxon>Amphibia</taxon>
        <taxon>Batrachia</taxon>
        <taxon>Anura</taxon>
        <taxon>Pipoidea</taxon>
        <taxon>Pipidae</taxon>
        <taxon>Xenopodinae</taxon>
        <taxon>Xenopus</taxon>
        <taxon>Xenopus</taxon>
    </lineage>
</organism>
<sequence length="459" mass="50465">MLNMSSDQEPPCSPTGTASSMSHVSDSDSDSPLSPAGSEGRGSHRPPGISKRDGEEPMDERFPACIRDAVSQVLKGYDWSLVPMPVRGSGGLKAKPHVKRPMNAFMVWAQAARRKLADQYPHLHNAELSKTLGKLWRLLSENEKRPFVEEAERLRVQHKKDHPDYKYQPRRRKSVKAGQSDSDSGAELGHHPGSQMYKSDSGMGSMGENHLHSEHAGQNHGPPTPPTTPKTDLHHGGKQELKHEGRRMMDNGRQNIDFSNVDINELSSEVISNIEAFDVHEFDQYLPLNGHGAIPADHGQNTTAAPYGPSYPHAAGATPAPVWSHKSSSTSSSSSIESGQQRPHIKTEQLSPSHYNDQSQGSPTHSDYNTYSAQACATTVSSATVPTAFPSSQCDYTDLPSSNYYNPYSGYPSSLYQYPYFHSSRRPYATPILNSLSIPPSHSPTSNWDQPVYTTLTRP</sequence>
<comment type="function">
    <text evidence="5">Transcription factor. Acts early in neural crest formation, functioning redundantly with the other group E Sox factors sox9 and sox10 to induce neural crest progenitors. Regulates the onset of expression of many neural crest marker genes including sox10, and regulates the development of multiple neural crest derivatives. May be required to regulate neural crest cell migration.</text>
</comment>
<comment type="subcellular location">
    <subcellularLocation>
        <location evidence="3">Nucleus</location>
    </subcellularLocation>
</comment>
<comment type="tissue specificity">
    <text evidence="5">From gastrula to neural stages, expressed in a ventrolateral domain around the blastopore. A second domain of expression appears at mid-gastrula stage (stage 11.5) lateral to the neural plate, in the presumptive neural crest. At neurula stage (stage 15), also expressed in the prospective cement gland. As development proceeds, expression persists in migrating cranial crest cells as they populate the pharyngeal arches, and in trunk neural crest cells. Not expressed early in the otic placode, with otic expression only beginning around stage 30.</text>
</comment>
<comment type="domain">
    <text evidence="1">The transactivation domains TAM and TAC (for transactivation domain in the middle and at the C-terminus, respectively) are required to contact transcriptional coactivators and basal transcriptional machinery components and thereby induce gene transactivation.</text>
</comment>
<comment type="domain">
    <text evidence="2">The 9aaTAD motif is a transactivation domain present in a large number of yeast and animal transcription factors.</text>
</comment>
<comment type="disruption phenotype">
    <text evidence="5">Impaired neural crest cell migration and delay in neural crest formation leading to severe defects in multiple lineages of the neural crest.</text>
</comment>
<accession>Q6VVD7</accession>
<name>SOX8_XENLA</name>
<gene>
    <name type="primary">sox8</name>
</gene>
<reference evidence="6 8" key="1">
    <citation type="journal article" date="2006" name="Development">
        <title>Functional analysis of Sox8 during neural crest development in Xenopus.</title>
        <authorList>
            <person name="O'Donnell M."/>
            <person name="Hong C.-S."/>
            <person name="Huang X."/>
            <person name="Delnicki R.J."/>
            <person name="Saint-Jeannet J.-P."/>
        </authorList>
    </citation>
    <scope>NUCLEOTIDE SEQUENCE [MRNA]</scope>
    <scope>FUNCTION</scope>
    <scope>TISSUE SPECIFICITY</scope>
    <scope>DISRUPTION PHENOTYPE</scope>
    <source>
        <tissue evidence="5">Neurula</tissue>
    </source>
</reference>
<reference key="2">
    <citation type="journal article" date="2006" name="Development">
        <authorList>
            <person name="O'Donnell M."/>
            <person name="Hong C.-S."/>
            <person name="Huang X."/>
            <person name="Delnicki R.J."/>
            <person name="Saint-Jeannet J.-P."/>
        </authorList>
    </citation>
    <scope>ERRATUM OF PUBMED:16943273</scope>
</reference>
<reference evidence="7" key="3">
    <citation type="submission" date="2008-11" db="EMBL/GenBank/DDBJ databases">
        <authorList>
            <consortium name="NIH - Xenopus Gene Collection (XGC) project"/>
        </authorList>
    </citation>
    <scope>NUCLEOTIDE SEQUENCE [LARGE SCALE MRNA]</scope>
</reference>
<dbReference type="EMBL" id="AY324658">
    <property type="protein sequence ID" value="AAQ67212.1"/>
    <property type="molecule type" value="mRNA"/>
</dbReference>
<dbReference type="EMBL" id="BC169521">
    <property type="protein sequence ID" value="AAI69521.1"/>
    <property type="molecule type" value="mRNA"/>
</dbReference>
<dbReference type="EMBL" id="BC169525">
    <property type="protein sequence ID" value="AAI69525.1"/>
    <property type="molecule type" value="mRNA"/>
</dbReference>
<dbReference type="RefSeq" id="NP_001083964.1">
    <property type="nucleotide sequence ID" value="NM_001090495.1"/>
</dbReference>
<dbReference type="SMR" id="Q6VVD7"/>
<dbReference type="GeneID" id="399214"/>
<dbReference type="KEGG" id="xla:399214"/>
<dbReference type="AGR" id="Xenbase:XB-GENE-480869"/>
<dbReference type="CTD" id="399214"/>
<dbReference type="Xenbase" id="XB-GENE-480869">
    <property type="gene designation" value="sox8.L"/>
</dbReference>
<dbReference type="OrthoDB" id="6247875at2759"/>
<dbReference type="Proteomes" id="UP000186698">
    <property type="component" value="Chromosome 9_10L"/>
</dbReference>
<dbReference type="Bgee" id="399214">
    <property type="expression patterns" value="Expressed in internal ear and 15 other cell types or tissues"/>
</dbReference>
<dbReference type="GO" id="GO:0005634">
    <property type="term" value="C:nucleus"/>
    <property type="evidence" value="ECO:0000318"/>
    <property type="project" value="GO_Central"/>
</dbReference>
<dbReference type="GO" id="GO:0000981">
    <property type="term" value="F:DNA-binding transcription factor activity, RNA polymerase II-specific"/>
    <property type="evidence" value="ECO:0000318"/>
    <property type="project" value="GO_Central"/>
</dbReference>
<dbReference type="GO" id="GO:0000978">
    <property type="term" value="F:RNA polymerase II cis-regulatory region sequence-specific DNA binding"/>
    <property type="evidence" value="ECO:0000318"/>
    <property type="project" value="GO_Central"/>
</dbReference>
<dbReference type="GO" id="GO:0048484">
    <property type="term" value="P:enteric nervous system development"/>
    <property type="evidence" value="ECO:0000318"/>
    <property type="project" value="GO_Central"/>
</dbReference>
<dbReference type="GO" id="GO:0002009">
    <property type="term" value="P:morphogenesis of an epithelium"/>
    <property type="evidence" value="ECO:0000318"/>
    <property type="project" value="GO_Central"/>
</dbReference>
<dbReference type="GO" id="GO:0000122">
    <property type="term" value="P:negative regulation of transcription by RNA polymerase II"/>
    <property type="evidence" value="ECO:0000318"/>
    <property type="project" value="GO_Central"/>
</dbReference>
<dbReference type="GO" id="GO:0014032">
    <property type="term" value="P:neural crest cell development"/>
    <property type="evidence" value="ECO:0000318"/>
    <property type="project" value="GO_Central"/>
</dbReference>
<dbReference type="GO" id="GO:0014029">
    <property type="term" value="P:neural crest formation"/>
    <property type="evidence" value="ECO:0000315"/>
    <property type="project" value="UniProtKB"/>
</dbReference>
<dbReference type="GO" id="GO:0007422">
    <property type="term" value="P:peripheral nervous system development"/>
    <property type="evidence" value="ECO:0000318"/>
    <property type="project" value="GO_Central"/>
</dbReference>
<dbReference type="CDD" id="cd22031">
    <property type="entry name" value="HMG-box_SoxE"/>
    <property type="match status" value="1"/>
</dbReference>
<dbReference type="FunFam" id="1.10.30.10:FF:000004">
    <property type="entry name" value="Transcription factor SOX-10"/>
    <property type="match status" value="1"/>
</dbReference>
<dbReference type="Gene3D" id="1.10.30.10">
    <property type="entry name" value="High mobility group box domain"/>
    <property type="match status" value="1"/>
</dbReference>
<dbReference type="InterPro" id="IPR009071">
    <property type="entry name" value="HMG_box_dom"/>
</dbReference>
<dbReference type="InterPro" id="IPR036910">
    <property type="entry name" value="HMG_box_dom_sf"/>
</dbReference>
<dbReference type="InterPro" id="IPR022151">
    <property type="entry name" value="Sox_N"/>
</dbReference>
<dbReference type="InterPro" id="IPR050917">
    <property type="entry name" value="SOX_TF"/>
</dbReference>
<dbReference type="PANTHER" id="PTHR45803">
    <property type="entry name" value="SOX100B"/>
    <property type="match status" value="1"/>
</dbReference>
<dbReference type="PANTHER" id="PTHR45803:SF2">
    <property type="entry name" value="TRANSCRIPTION FACTOR SOX-8"/>
    <property type="match status" value="1"/>
</dbReference>
<dbReference type="Pfam" id="PF00505">
    <property type="entry name" value="HMG_box"/>
    <property type="match status" value="1"/>
</dbReference>
<dbReference type="Pfam" id="PF12444">
    <property type="entry name" value="Sox_N"/>
    <property type="match status" value="1"/>
</dbReference>
<dbReference type="SMART" id="SM00398">
    <property type="entry name" value="HMG"/>
    <property type="match status" value="1"/>
</dbReference>
<dbReference type="SUPFAM" id="SSF47095">
    <property type="entry name" value="HMG-box"/>
    <property type="match status" value="1"/>
</dbReference>
<dbReference type="PROSITE" id="PS50118">
    <property type="entry name" value="HMG_BOX_2"/>
    <property type="match status" value="1"/>
</dbReference>
<feature type="chain" id="PRO_0000377414" description="Transcription factor Sox-8">
    <location>
        <begin position="1"/>
        <end position="459"/>
    </location>
</feature>
<feature type="DNA-binding region" description="HMG box" evidence="3">
    <location>
        <begin position="98"/>
        <end position="166"/>
    </location>
</feature>
<feature type="region of interest" description="Disordered" evidence="4">
    <location>
        <begin position="1"/>
        <end position="57"/>
    </location>
</feature>
<feature type="region of interest" description="Dimerization (DIM)" evidence="2">
    <location>
        <begin position="56"/>
        <end position="96"/>
    </location>
</feature>
<feature type="region of interest" description="Disordered" evidence="4">
    <location>
        <begin position="152"/>
        <end position="247"/>
    </location>
</feature>
<feature type="region of interest" description="Transactivation domain (TAM)" evidence="2">
    <location>
        <begin position="222"/>
        <end position="297"/>
    </location>
</feature>
<feature type="region of interest" description="Disordered" evidence="4">
    <location>
        <begin position="293"/>
        <end position="367"/>
    </location>
</feature>
<feature type="region of interest" description="Transactivation domain (TAC)" evidence="2">
    <location>
        <begin position="342"/>
        <end position="459"/>
    </location>
</feature>
<feature type="region of interest" description="Disordered" evidence="4">
    <location>
        <begin position="439"/>
        <end position="459"/>
    </location>
</feature>
<feature type="short sequence motif" description="9aaTAD" evidence="2">
    <location>
        <begin position="413"/>
        <end position="421"/>
    </location>
</feature>
<feature type="compositionally biased region" description="Polar residues" evidence="4">
    <location>
        <begin position="1"/>
        <end position="18"/>
    </location>
</feature>
<feature type="compositionally biased region" description="Low complexity" evidence="4">
    <location>
        <begin position="19"/>
        <end position="34"/>
    </location>
</feature>
<feature type="compositionally biased region" description="Basic and acidic residues" evidence="4">
    <location>
        <begin position="152"/>
        <end position="167"/>
    </location>
</feature>
<feature type="compositionally biased region" description="Basic and acidic residues" evidence="4">
    <location>
        <begin position="231"/>
        <end position="247"/>
    </location>
</feature>
<feature type="compositionally biased region" description="Low complexity" evidence="4">
    <location>
        <begin position="324"/>
        <end position="338"/>
    </location>
</feature>
<feature type="compositionally biased region" description="Polar residues" evidence="4">
    <location>
        <begin position="348"/>
        <end position="367"/>
    </location>
</feature>
<evidence type="ECO:0000250" key="1">
    <source>
        <dbReference type="UniProtKB" id="P48436"/>
    </source>
</evidence>
<evidence type="ECO:0000250" key="2">
    <source>
        <dbReference type="UniProtKB" id="P57073"/>
    </source>
</evidence>
<evidence type="ECO:0000255" key="3">
    <source>
        <dbReference type="PROSITE-ProRule" id="PRU00267"/>
    </source>
</evidence>
<evidence type="ECO:0000256" key="4">
    <source>
        <dbReference type="SAM" id="MobiDB-lite"/>
    </source>
</evidence>
<evidence type="ECO:0000269" key="5">
    <source>
    </source>
</evidence>
<evidence type="ECO:0000305" key="6"/>
<evidence type="ECO:0000312" key="7">
    <source>
        <dbReference type="EMBL" id="AAI69521.1"/>
    </source>
</evidence>
<evidence type="ECO:0000312" key="8">
    <source>
        <dbReference type="EMBL" id="AAQ67212.1"/>
    </source>
</evidence>
<protein>
    <recommendedName>
        <fullName evidence="2">Transcription factor Sox-8</fullName>
    </recommendedName>
</protein>